<sequence>MQRLLTPVRQVLQVKRVMQEASLLPARLLPAAHPSFSTVPAVPLAKTDTWPKDVGILAMEVYFPAQYVDQTELEKFNKVEAGRYTVGLGQTQMGFCSVQEDVNSLCLTVVQQLMERTQLPWDSVGRLEVGTETIIDKSKAVKTVLMELFQDSGNTDIEGIDTTNACYGGTASLFNAANWMESSSWDGRYALVVCGDIAVYPSGNARPTGGAGAVAMLVGPEAPLVLERGLRGTHMENVYDFYKPDVTSEYPLVDGKLSIQCYLRALDKCYAFYRQKIEKQWKQAGIDRPFTLDDVQYMIFHTPFCKLVQKSLARLMFNDFLLASGDTQTGIYKGLEAFRGLKLEDTYTNKDVDKAFLKASLNMFNKKTKNSLYLSTYNGNMYTSSLYGCLASLLAHHSAQDLAGSRIGAFSYGSGLAASFFSFRVSQDASPGSPLEKLVSSTSDLQKRLASRKRVSPEEFTEIMNQREQYYHKMNFSPPGDKNSLFPGTWYLERVDELYRRKYARRPV</sequence>
<protein>
    <recommendedName>
        <fullName>Hydroxymethylglutaryl-CoA synthase, mitochondrial</fullName>
        <shortName>HMG-CoA synthase</shortName>
        <ecNumber evidence="2">2.3.3.10</ecNumber>
    </recommendedName>
    <alternativeName>
        <fullName>3-hydroxy-3-methylglutaryl coenzyme A synthase</fullName>
    </alternativeName>
</protein>
<reference key="1">
    <citation type="submission" date="2006-01" db="EMBL/GenBank/DDBJ databases">
        <authorList>
            <consortium name="NIH - Mammalian Gene Collection (MGC) project"/>
        </authorList>
    </citation>
    <scope>NUCLEOTIDE SEQUENCE [LARGE SCALE MRNA]</scope>
    <source>
        <strain>Hereford</strain>
        <tissue>Testis</tissue>
    </source>
</reference>
<reference key="2">
    <citation type="journal article" date="2011" name="Science">
        <title>Sirt5 is a NAD-dependent protein lysine demalonylase and desuccinylase.</title>
        <authorList>
            <person name="Du J."/>
            <person name="Zhou Y."/>
            <person name="Su X."/>
            <person name="Yu J.J."/>
            <person name="Khan S."/>
            <person name="Jiang H."/>
            <person name="Kim J."/>
            <person name="Woo J."/>
            <person name="Kim J.H."/>
            <person name="Choi B.H."/>
            <person name="He B."/>
            <person name="Chen W."/>
            <person name="Zhang S."/>
            <person name="Cerione R.A."/>
            <person name="Auwerx J."/>
            <person name="Hao Q."/>
            <person name="Lin H."/>
        </authorList>
    </citation>
    <scope>SUCCINYLATION AT LYS-310</scope>
</reference>
<comment type="function">
    <text evidence="2">Catalyzes the first irreversible step in ketogenesis, condensing acetyl-CoA to acetoacetyl-CoA to form HMG-CoA, which is converted by HMG-CoA reductase (HMGCR) into mevalonate.</text>
</comment>
<comment type="catalytic activity">
    <reaction evidence="2">
        <text>acetoacetyl-CoA + acetyl-CoA + H2O = (3S)-3-hydroxy-3-methylglutaryl-CoA + CoA + H(+)</text>
        <dbReference type="Rhea" id="RHEA:10188"/>
        <dbReference type="ChEBI" id="CHEBI:15377"/>
        <dbReference type="ChEBI" id="CHEBI:15378"/>
        <dbReference type="ChEBI" id="CHEBI:43074"/>
        <dbReference type="ChEBI" id="CHEBI:57286"/>
        <dbReference type="ChEBI" id="CHEBI:57287"/>
        <dbReference type="ChEBI" id="CHEBI:57288"/>
        <dbReference type="EC" id="2.3.3.10"/>
    </reaction>
    <physiologicalReaction direction="left-to-right" evidence="2">
        <dbReference type="Rhea" id="RHEA:10189"/>
    </physiologicalReaction>
</comment>
<comment type="pathway">
    <text>Metabolic intermediate biosynthesis; (R)-mevalonate biosynthesis; (R)-mevalonate from acetyl-CoA: step 2/3.</text>
</comment>
<comment type="subunit">
    <text evidence="2">Homodimer.</text>
</comment>
<comment type="subcellular location">
    <subcellularLocation>
        <location evidence="1">Mitochondrion</location>
    </subcellularLocation>
</comment>
<comment type="PTM">
    <text evidence="3">Succinylated. Desuccinylated by SIRT5. Succinylation, at least at Lys-310, inhibits the enzymatic activity.</text>
</comment>
<comment type="similarity">
    <text evidence="6">Belongs to the thiolase-like superfamily. HMG-CoA synthase family.</text>
</comment>
<organism>
    <name type="scientific">Bos taurus</name>
    <name type="common">Bovine</name>
    <dbReference type="NCBI Taxonomy" id="9913"/>
    <lineage>
        <taxon>Eukaryota</taxon>
        <taxon>Metazoa</taxon>
        <taxon>Chordata</taxon>
        <taxon>Craniata</taxon>
        <taxon>Vertebrata</taxon>
        <taxon>Euteleostomi</taxon>
        <taxon>Mammalia</taxon>
        <taxon>Eutheria</taxon>
        <taxon>Laurasiatheria</taxon>
        <taxon>Artiodactyla</taxon>
        <taxon>Ruminantia</taxon>
        <taxon>Pecora</taxon>
        <taxon>Bovidae</taxon>
        <taxon>Bovinae</taxon>
        <taxon>Bos</taxon>
    </lineage>
</organism>
<name>HMCS2_BOVIN</name>
<feature type="transit peptide" description="Mitochondrion" evidence="6">
    <location>
        <begin position="1"/>
        <end position="37"/>
    </location>
</feature>
<feature type="chain" id="PRO_0000236276" description="Hydroxymethylglutaryl-CoA synthase, mitochondrial">
    <location>
        <begin position="38"/>
        <end position="508"/>
    </location>
</feature>
<feature type="active site" description="Proton donor/acceptor" evidence="4">
    <location>
        <position position="132"/>
    </location>
</feature>
<feature type="active site" description="Acyl-thioester intermediate" evidence="4">
    <location>
        <position position="166"/>
    </location>
</feature>
<feature type="active site" description="Proton donor/acceptor" evidence="4">
    <location>
        <position position="301"/>
    </location>
</feature>
<feature type="binding site" evidence="2">
    <location>
        <position position="80"/>
    </location>
    <ligand>
        <name>(3S)-3-hydroxy-3-methylglutaryl-CoA</name>
        <dbReference type="ChEBI" id="CHEBI:43074"/>
    </ligand>
</feature>
<feature type="binding site" evidence="2">
    <location>
        <position position="81"/>
    </location>
    <ligand>
        <name>(3S)-3-hydroxy-3-methylglutaryl-CoA</name>
        <dbReference type="ChEBI" id="CHEBI:43074"/>
    </ligand>
</feature>
<feature type="binding site" evidence="2">
    <location>
        <position position="166"/>
    </location>
    <ligand>
        <name>(3S)-3-hydroxy-3-methylglutaryl-CoA</name>
        <dbReference type="ChEBI" id="CHEBI:43074"/>
    </ligand>
</feature>
<feature type="binding site" evidence="2">
    <location>
        <position position="204"/>
    </location>
    <ligand>
        <name>(3S)-3-hydroxy-3-methylglutaryl-CoA</name>
        <dbReference type="ChEBI" id="CHEBI:43074"/>
    </ligand>
</feature>
<feature type="binding site" evidence="2">
    <location>
        <position position="208"/>
    </location>
    <ligand>
        <name>(3S)-3-hydroxy-3-methylglutaryl-CoA</name>
        <dbReference type="ChEBI" id="CHEBI:43074"/>
    </ligand>
</feature>
<feature type="binding site" evidence="2">
    <location>
        <position position="258"/>
    </location>
    <ligand>
        <name>(3S)-3-hydroxy-3-methylglutaryl-CoA</name>
        <dbReference type="ChEBI" id="CHEBI:43074"/>
    </ligand>
</feature>
<feature type="binding site" evidence="2">
    <location>
        <position position="301"/>
    </location>
    <ligand>
        <name>(3S)-3-hydroxy-3-methylglutaryl-CoA</name>
        <dbReference type="ChEBI" id="CHEBI:43074"/>
    </ligand>
</feature>
<feature type="binding site" evidence="2">
    <location>
        <position position="310"/>
    </location>
    <ligand>
        <name>(3S)-3-hydroxy-3-methylglutaryl-CoA</name>
        <dbReference type="ChEBI" id="CHEBI:43074"/>
    </ligand>
</feature>
<feature type="binding site" evidence="2">
    <location>
        <position position="380"/>
    </location>
    <ligand>
        <name>(3S)-3-hydroxy-3-methylglutaryl-CoA</name>
        <dbReference type="ChEBI" id="CHEBI:43074"/>
    </ligand>
</feature>
<feature type="binding site" evidence="2">
    <location>
        <position position="414"/>
    </location>
    <ligand>
        <name>(3S)-3-hydroxy-3-methylglutaryl-CoA</name>
        <dbReference type="ChEBI" id="CHEBI:43074"/>
    </ligand>
</feature>
<feature type="modified residue" description="N6-succinyllysine" evidence="3">
    <location>
        <position position="52"/>
    </location>
</feature>
<feature type="modified residue" description="N6-acetyllysine" evidence="3">
    <location>
        <position position="243"/>
    </location>
</feature>
<feature type="modified residue" description="N6-acetyllysine; alternate" evidence="3">
    <location>
        <position position="256"/>
    </location>
</feature>
<feature type="modified residue" description="N6-succinyllysine; alternate" evidence="3">
    <location>
        <position position="256"/>
    </location>
</feature>
<feature type="modified residue" description="N6-acetyllysine" evidence="3">
    <location>
        <position position="306"/>
    </location>
</feature>
<feature type="modified residue" description="N6-acetyllysine; alternate" evidence="3">
    <location>
        <position position="310"/>
    </location>
</feature>
<feature type="modified residue" description="N6-succinyllysine; alternate" evidence="5">
    <location>
        <position position="310"/>
    </location>
</feature>
<feature type="modified residue" description="N6-succinyllysine" evidence="3">
    <location>
        <position position="333"/>
    </location>
</feature>
<feature type="modified residue" description="N6-acetyllysine; alternate" evidence="3">
    <location>
        <position position="342"/>
    </location>
</feature>
<feature type="modified residue" description="N6-succinyllysine; alternate" evidence="3">
    <location>
        <position position="342"/>
    </location>
</feature>
<feature type="modified residue" description="N6-acetyllysine; alternate" evidence="3">
    <location>
        <position position="350"/>
    </location>
</feature>
<feature type="modified residue" description="N6-succinyllysine; alternate" evidence="3">
    <location>
        <position position="350"/>
    </location>
</feature>
<feature type="modified residue" description="N6-acetyllysine; alternate" evidence="3">
    <location>
        <position position="354"/>
    </location>
</feature>
<feature type="modified residue" description="N6-succinyllysine; alternate" evidence="3">
    <location>
        <position position="354"/>
    </location>
</feature>
<feature type="modified residue" description="N6-acetyllysine; alternate" evidence="3">
    <location>
        <position position="358"/>
    </location>
</feature>
<feature type="modified residue" description="N6-succinyllysine; alternate" evidence="3">
    <location>
        <position position="358"/>
    </location>
</feature>
<feature type="modified residue" description="Phosphoserine" evidence="2">
    <location>
        <position position="433"/>
    </location>
</feature>
<feature type="modified residue" description="N6-acetyllysine" evidence="3">
    <location>
        <position position="437"/>
    </location>
</feature>
<feature type="modified residue" description="Phosphoserine" evidence="2">
    <location>
        <position position="440"/>
    </location>
</feature>
<feature type="modified residue" description="N6-acetyllysine; alternate" evidence="3">
    <location>
        <position position="447"/>
    </location>
</feature>
<feature type="modified residue" description="N6-succinyllysine; alternate" evidence="3">
    <location>
        <position position="447"/>
    </location>
</feature>
<feature type="modified residue" description="Phosphoserine" evidence="3">
    <location>
        <position position="456"/>
    </location>
</feature>
<feature type="modified residue" description="N6-acetyllysine; alternate" evidence="3">
    <location>
        <position position="473"/>
    </location>
</feature>
<feature type="modified residue" description="N6-succinyllysine; alternate" evidence="3">
    <location>
        <position position="473"/>
    </location>
</feature>
<feature type="modified residue" description="Phosphoserine" evidence="1">
    <location>
        <position position="477"/>
    </location>
</feature>
<gene>
    <name type="primary">HMGCS2</name>
</gene>
<proteinExistence type="evidence at protein level"/>
<evidence type="ECO:0000250" key="1">
    <source>
        <dbReference type="UniProtKB" id="P22791"/>
    </source>
</evidence>
<evidence type="ECO:0000250" key="2">
    <source>
        <dbReference type="UniProtKB" id="P54868"/>
    </source>
</evidence>
<evidence type="ECO:0000250" key="3">
    <source>
        <dbReference type="UniProtKB" id="P54869"/>
    </source>
</evidence>
<evidence type="ECO:0000255" key="4">
    <source>
        <dbReference type="PROSITE-ProRule" id="PRU10116"/>
    </source>
</evidence>
<evidence type="ECO:0000269" key="5">
    <source>
    </source>
</evidence>
<evidence type="ECO:0000305" key="6"/>
<accession>Q2KIE6</accession>
<keyword id="KW-0007">Acetylation</keyword>
<keyword id="KW-0152">Cholesterol biosynthesis</keyword>
<keyword id="KW-0153">Cholesterol metabolism</keyword>
<keyword id="KW-0444">Lipid biosynthesis</keyword>
<keyword id="KW-0443">Lipid metabolism</keyword>
<keyword id="KW-0496">Mitochondrion</keyword>
<keyword id="KW-0597">Phosphoprotein</keyword>
<keyword id="KW-1185">Reference proteome</keyword>
<keyword id="KW-0752">Steroid biosynthesis</keyword>
<keyword id="KW-0753">Steroid metabolism</keyword>
<keyword id="KW-0756">Sterol biosynthesis</keyword>
<keyword id="KW-1207">Sterol metabolism</keyword>
<keyword id="KW-0808">Transferase</keyword>
<keyword id="KW-0809">Transit peptide</keyword>
<dbReference type="EC" id="2.3.3.10" evidence="2"/>
<dbReference type="EMBL" id="BC112666">
    <property type="protein sequence ID" value="AAI12667.1"/>
    <property type="molecule type" value="mRNA"/>
</dbReference>
<dbReference type="RefSeq" id="NP_001039348.1">
    <property type="nucleotide sequence ID" value="NM_001045883.1"/>
</dbReference>
<dbReference type="RefSeq" id="XP_010801406.1">
    <property type="nucleotide sequence ID" value="XM_010803104.4"/>
</dbReference>
<dbReference type="SMR" id="Q2KIE6"/>
<dbReference type="FunCoup" id="Q2KIE6">
    <property type="interactions" value="1234"/>
</dbReference>
<dbReference type="STRING" id="9913.ENSBTAP00000005088"/>
<dbReference type="PaxDb" id="9913-ENSBTAP00000005088"/>
<dbReference type="PeptideAtlas" id="Q2KIE6"/>
<dbReference type="Ensembl" id="ENSBTAT00000005088.7">
    <property type="protein sequence ID" value="ENSBTAP00000005088.5"/>
    <property type="gene ID" value="ENSBTAG00000003898.7"/>
</dbReference>
<dbReference type="GeneID" id="503684"/>
<dbReference type="KEGG" id="bta:503684"/>
<dbReference type="CTD" id="3158"/>
<dbReference type="VEuPathDB" id="HostDB:ENSBTAG00000003898"/>
<dbReference type="VGNC" id="VGNC:29881">
    <property type="gene designation" value="HMGCS2"/>
</dbReference>
<dbReference type="eggNOG" id="KOG1393">
    <property type="taxonomic scope" value="Eukaryota"/>
</dbReference>
<dbReference type="GeneTree" id="ENSGT00390000006096"/>
<dbReference type="HOGENOM" id="CLU_008065_0_1_1"/>
<dbReference type="InParanoid" id="Q2KIE6"/>
<dbReference type="OMA" id="ARNGNMY"/>
<dbReference type="OrthoDB" id="1269963at2759"/>
<dbReference type="TreeFam" id="TF105361"/>
<dbReference type="Reactome" id="R-BTA-77111">
    <property type="pathway name" value="Synthesis of Ketone Bodies"/>
</dbReference>
<dbReference type="Reactome" id="R-BTA-9837999">
    <property type="pathway name" value="Mitochondrial protein degradation"/>
</dbReference>
<dbReference type="UniPathway" id="UPA00058">
    <property type="reaction ID" value="UER00102"/>
</dbReference>
<dbReference type="Proteomes" id="UP000009136">
    <property type="component" value="Chromosome 3"/>
</dbReference>
<dbReference type="Bgee" id="ENSBTAG00000003898">
    <property type="expression patterns" value="Expressed in digestive system secreted substance and 49 other cell types or tissues"/>
</dbReference>
<dbReference type="GO" id="GO:0005739">
    <property type="term" value="C:mitochondrion"/>
    <property type="evidence" value="ECO:0000318"/>
    <property type="project" value="GO_Central"/>
</dbReference>
<dbReference type="GO" id="GO:0004421">
    <property type="term" value="F:hydroxymethylglutaryl-CoA synthase activity"/>
    <property type="evidence" value="ECO:0000250"/>
    <property type="project" value="UniProtKB"/>
</dbReference>
<dbReference type="GO" id="GO:0042802">
    <property type="term" value="F:identical protein binding"/>
    <property type="evidence" value="ECO:0000250"/>
    <property type="project" value="UniProtKB"/>
</dbReference>
<dbReference type="GO" id="GO:0006084">
    <property type="term" value="P:acetyl-CoA metabolic process"/>
    <property type="evidence" value="ECO:0000318"/>
    <property type="project" value="GO_Central"/>
</dbReference>
<dbReference type="GO" id="GO:0006695">
    <property type="term" value="P:cholesterol biosynthetic process"/>
    <property type="evidence" value="ECO:0007669"/>
    <property type="project" value="UniProtKB-KW"/>
</dbReference>
<dbReference type="GO" id="GO:0010142">
    <property type="term" value="P:farnesyl diphosphate biosynthetic process, mevalonate pathway"/>
    <property type="evidence" value="ECO:0000318"/>
    <property type="project" value="GO_Central"/>
</dbReference>
<dbReference type="GO" id="GO:0046951">
    <property type="term" value="P:ketone body biosynthetic process"/>
    <property type="evidence" value="ECO:0007669"/>
    <property type="project" value="Ensembl"/>
</dbReference>
<dbReference type="CDD" id="cd00827">
    <property type="entry name" value="init_cond_enzymes"/>
    <property type="match status" value="1"/>
</dbReference>
<dbReference type="FunFam" id="3.40.47.10:FF:000008">
    <property type="entry name" value="3-hydroxy-3-methylglutaryl coenzyme A synthase"/>
    <property type="match status" value="1"/>
</dbReference>
<dbReference type="Gene3D" id="3.40.47.10">
    <property type="match status" value="1"/>
</dbReference>
<dbReference type="InterPro" id="IPR000590">
    <property type="entry name" value="HMG_CoA_synt_AS"/>
</dbReference>
<dbReference type="InterPro" id="IPR013746">
    <property type="entry name" value="HMG_CoA_synt_C_dom"/>
</dbReference>
<dbReference type="InterPro" id="IPR013528">
    <property type="entry name" value="HMG_CoA_synth_N"/>
</dbReference>
<dbReference type="InterPro" id="IPR010122">
    <property type="entry name" value="HMG_CoA_synthase_euk"/>
</dbReference>
<dbReference type="InterPro" id="IPR016039">
    <property type="entry name" value="Thiolase-like"/>
</dbReference>
<dbReference type="NCBIfam" id="TIGR01833">
    <property type="entry name" value="HMG-CoA-S_euk"/>
    <property type="match status" value="1"/>
</dbReference>
<dbReference type="PANTHER" id="PTHR43323">
    <property type="entry name" value="3-HYDROXY-3-METHYLGLUTARYL COENZYME A SYNTHASE"/>
    <property type="match status" value="1"/>
</dbReference>
<dbReference type="PANTHER" id="PTHR43323:SF1">
    <property type="entry name" value="HYDROXYMETHYLGLUTARYL-COA SYNTHASE, MITOCHONDRIAL"/>
    <property type="match status" value="1"/>
</dbReference>
<dbReference type="Pfam" id="PF08540">
    <property type="entry name" value="HMG_CoA_synt_C"/>
    <property type="match status" value="1"/>
</dbReference>
<dbReference type="Pfam" id="PF01154">
    <property type="entry name" value="HMG_CoA_synt_N"/>
    <property type="match status" value="1"/>
</dbReference>
<dbReference type="SUPFAM" id="SSF53901">
    <property type="entry name" value="Thiolase-like"/>
    <property type="match status" value="2"/>
</dbReference>
<dbReference type="PROSITE" id="PS01226">
    <property type="entry name" value="HMG_COA_SYNTHASE"/>
    <property type="match status" value="1"/>
</dbReference>